<evidence type="ECO:0000255" key="1">
    <source>
        <dbReference type="HAMAP-Rule" id="MF_00708"/>
    </source>
</evidence>
<feature type="chain" id="PRO_1000045526" description="Fumarate reductase subunit C">
    <location>
        <begin position="1"/>
        <end position="131"/>
    </location>
</feature>
<feature type="transmembrane region" description="Helical" evidence="1">
    <location>
        <begin position="30"/>
        <end position="50"/>
    </location>
</feature>
<feature type="transmembrane region" description="Helical" evidence="1">
    <location>
        <begin position="61"/>
        <end position="81"/>
    </location>
</feature>
<feature type="transmembrane region" description="Helical" evidence="1">
    <location>
        <begin position="110"/>
        <end position="130"/>
    </location>
</feature>
<sequence length="131" mass="14870">MTTKRKPYVRPMTSTWWKKLPFYRFYMVREGTAVPTVWFSIVLIYGLFALKHGADSWAGYIGFLQNPVVVILNLITLAAALLHTKTWFELAPKAANVIIKGEKMGPEPVIKGLWVVTAVVTVVILFVALFW</sequence>
<reference key="1">
    <citation type="submission" date="2006-09" db="EMBL/GenBank/DDBJ databases">
        <authorList>
            <consortium name="The Klebsiella pneumonia Genome Sequencing Project"/>
            <person name="McClelland M."/>
            <person name="Sanderson E.K."/>
            <person name="Spieth J."/>
            <person name="Clifton W.S."/>
            <person name="Latreille P."/>
            <person name="Sabo A."/>
            <person name="Pepin K."/>
            <person name="Bhonagiri V."/>
            <person name="Porwollik S."/>
            <person name="Ali J."/>
            <person name="Wilson R.K."/>
        </authorList>
    </citation>
    <scope>NUCLEOTIDE SEQUENCE [LARGE SCALE GENOMIC DNA]</scope>
    <source>
        <strain>ATCC 700721 / MGH 78578</strain>
    </source>
</reference>
<name>FRDC_KLEP7</name>
<proteinExistence type="inferred from homology"/>
<organism>
    <name type="scientific">Klebsiella pneumoniae subsp. pneumoniae (strain ATCC 700721 / MGH 78578)</name>
    <dbReference type="NCBI Taxonomy" id="272620"/>
    <lineage>
        <taxon>Bacteria</taxon>
        <taxon>Pseudomonadati</taxon>
        <taxon>Pseudomonadota</taxon>
        <taxon>Gammaproteobacteria</taxon>
        <taxon>Enterobacterales</taxon>
        <taxon>Enterobacteriaceae</taxon>
        <taxon>Klebsiella/Raoultella group</taxon>
        <taxon>Klebsiella</taxon>
        <taxon>Klebsiella pneumoniae complex</taxon>
    </lineage>
</organism>
<accession>A6TH71</accession>
<comment type="function">
    <text evidence="1">Two distinct, membrane-bound, FAD-containing enzymes are responsible for the catalysis of fumarate and succinate interconversion; fumarate reductase is used in anaerobic growth, and succinate dehydrogenase is used in aerobic growth. Anchors the catalytic components of the fumarate reductase complex to the cell inner membrane, binds quinones.</text>
</comment>
<comment type="subunit">
    <text evidence="1">Part of an enzyme complex containing four subunits: a flavoprotein (FrdA), an iron-sulfur protein (FrdB), and two hydrophobic anchor proteins (FrdC and FrdD).</text>
</comment>
<comment type="subcellular location">
    <subcellularLocation>
        <location evidence="1">Cell inner membrane</location>
        <topology evidence="1">Multi-pass membrane protein</topology>
    </subcellularLocation>
</comment>
<comment type="similarity">
    <text evidence="1">Belongs to the FrdC family.</text>
</comment>
<dbReference type="EMBL" id="CP000647">
    <property type="protein sequence ID" value="ABR79905.1"/>
    <property type="molecule type" value="Genomic_DNA"/>
</dbReference>
<dbReference type="RefSeq" id="WP_015959287.1">
    <property type="nucleotide sequence ID" value="NC_009648.1"/>
</dbReference>
<dbReference type="SMR" id="A6TH71"/>
<dbReference type="STRING" id="272620.KPN_04551"/>
<dbReference type="jPOST" id="A6TH71"/>
<dbReference type="PaxDb" id="272620-KPN_04551"/>
<dbReference type="EnsemblBacteria" id="ABR79905">
    <property type="protein sequence ID" value="ABR79905"/>
    <property type="gene ID" value="KPN_04551"/>
</dbReference>
<dbReference type="KEGG" id="kpn:KPN_04551"/>
<dbReference type="HOGENOM" id="CLU_156492_0_0_6"/>
<dbReference type="Proteomes" id="UP000000265">
    <property type="component" value="Chromosome"/>
</dbReference>
<dbReference type="GO" id="GO:0045283">
    <property type="term" value="C:fumarate reductase complex"/>
    <property type="evidence" value="ECO:0007669"/>
    <property type="project" value="UniProtKB-UniRule"/>
</dbReference>
<dbReference type="GO" id="GO:0005886">
    <property type="term" value="C:plasma membrane"/>
    <property type="evidence" value="ECO:0007669"/>
    <property type="project" value="UniProtKB-SubCell"/>
</dbReference>
<dbReference type="GO" id="GO:0000104">
    <property type="term" value="F:succinate dehydrogenase activity"/>
    <property type="evidence" value="ECO:0007669"/>
    <property type="project" value="UniProtKB-UniRule"/>
</dbReference>
<dbReference type="CDD" id="cd00546">
    <property type="entry name" value="QFR_TypeD_subunitC"/>
    <property type="match status" value="1"/>
</dbReference>
<dbReference type="Gene3D" id="1.20.1300.10">
    <property type="entry name" value="Fumarate reductase/succinate dehydrogenase, transmembrane subunit"/>
    <property type="match status" value="1"/>
</dbReference>
<dbReference type="HAMAP" id="MF_00708">
    <property type="entry name" value="Fumarate_red_C"/>
    <property type="match status" value="1"/>
</dbReference>
<dbReference type="InterPro" id="IPR003510">
    <property type="entry name" value="Fumarate_red_C"/>
</dbReference>
<dbReference type="InterPro" id="IPR034804">
    <property type="entry name" value="SQR/QFR_C/D"/>
</dbReference>
<dbReference type="NCBIfam" id="NF003445">
    <property type="entry name" value="PRK04987.1"/>
    <property type="match status" value="1"/>
</dbReference>
<dbReference type="Pfam" id="PF02300">
    <property type="entry name" value="Fumarate_red_C"/>
    <property type="match status" value="1"/>
</dbReference>
<dbReference type="PIRSF" id="PIRSF000180">
    <property type="entry name" value="FrdC"/>
    <property type="match status" value="1"/>
</dbReference>
<dbReference type="SUPFAM" id="SSF81343">
    <property type="entry name" value="Fumarate reductase respiratory complex transmembrane subunits"/>
    <property type="match status" value="1"/>
</dbReference>
<protein>
    <recommendedName>
        <fullName evidence="1">Fumarate reductase subunit C</fullName>
    </recommendedName>
    <alternativeName>
        <fullName evidence="1">Fumarate reductase 15 kDa hydrophobic protein</fullName>
    </alternativeName>
    <alternativeName>
        <fullName evidence="1">Quinol-fumarate reductase subunit C</fullName>
        <shortName evidence="1">QFR subunit C</shortName>
    </alternativeName>
</protein>
<gene>
    <name evidence="1" type="primary">frdC</name>
    <name type="ordered locus">KPN78578_44810</name>
    <name type="ORF">KPN_04551</name>
</gene>
<keyword id="KW-0997">Cell inner membrane</keyword>
<keyword id="KW-1003">Cell membrane</keyword>
<keyword id="KW-0472">Membrane</keyword>
<keyword id="KW-0812">Transmembrane</keyword>
<keyword id="KW-1133">Transmembrane helix</keyword>